<keyword id="KW-0238">DNA-binding</keyword>
<protein>
    <recommendedName>
        <fullName evidence="1">Single-stranded DNA-binding protein</fullName>
        <shortName evidence="1">SSB</shortName>
    </recommendedName>
</protein>
<gene>
    <name type="primary">ssb</name>
    <name type="ordered locus">MW1921</name>
</gene>
<name>SSB_STAAW</name>
<reference key="1">
    <citation type="journal article" date="2002" name="Lancet">
        <title>Genome and virulence determinants of high virulence community-acquired MRSA.</title>
        <authorList>
            <person name="Baba T."/>
            <person name="Takeuchi F."/>
            <person name="Kuroda M."/>
            <person name="Yuzawa H."/>
            <person name="Aoki K."/>
            <person name="Oguchi A."/>
            <person name="Nagai Y."/>
            <person name="Iwama N."/>
            <person name="Asano K."/>
            <person name="Naimi T."/>
            <person name="Kuroda H."/>
            <person name="Cui L."/>
            <person name="Yamamoto K."/>
            <person name="Hiramatsu K."/>
        </authorList>
    </citation>
    <scope>NUCLEOTIDE SEQUENCE [LARGE SCALE GENOMIC DNA]</scope>
    <source>
        <strain>MW2</strain>
    </source>
</reference>
<evidence type="ECO:0000255" key="1">
    <source>
        <dbReference type="HAMAP-Rule" id="MF_00984"/>
    </source>
</evidence>
<evidence type="ECO:0000256" key="2">
    <source>
        <dbReference type="SAM" id="MobiDB-lite"/>
    </source>
</evidence>
<comment type="subunit">
    <text evidence="1">Homotetramer.</text>
</comment>
<organism>
    <name type="scientific">Staphylococcus aureus (strain MW2)</name>
    <dbReference type="NCBI Taxonomy" id="196620"/>
    <lineage>
        <taxon>Bacteria</taxon>
        <taxon>Bacillati</taxon>
        <taxon>Bacillota</taxon>
        <taxon>Bacilli</taxon>
        <taxon>Bacillales</taxon>
        <taxon>Staphylococcaceae</taxon>
        <taxon>Staphylococcus</taxon>
    </lineage>
</organism>
<dbReference type="EMBL" id="BA000033">
    <property type="protein sequence ID" value="BAB95786.1"/>
    <property type="molecule type" value="Genomic_DNA"/>
</dbReference>
<dbReference type="RefSeq" id="WP_000934765.1">
    <property type="nucleotide sequence ID" value="NC_003923.1"/>
</dbReference>
<dbReference type="SMR" id="Q8NVN2"/>
<dbReference type="KEGG" id="sam:MW1921"/>
<dbReference type="HOGENOM" id="CLU_078758_6_1_9"/>
<dbReference type="GO" id="GO:0009295">
    <property type="term" value="C:nucleoid"/>
    <property type="evidence" value="ECO:0007669"/>
    <property type="project" value="TreeGrafter"/>
</dbReference>
<dbReference type="GO" id="GO:0003697">
    <property type="term" value="F:single-stranded DNA binding"/>
    <property type="evidence" value="ECO:0007669"/>
    <property type="project" value="UniProtKB-UniRule"/>
</dbReference>
<dbReference type="GO" id="GO:0006260">
    <property type="term" value="P:DNA replication"/>
    <property type="evidence" value="ECO:0007669"/>
    <property type="project" value="InterPro"/>
</dbReference>
<dbReference type="CDD" id="cd04496">
    <property type="entry name" value="SSB_OBF"/>
    <property type="match status" value="1"/>
</dbReference>
<dbReference type="FunFam" id="2.40.50.140:FF:000084">
    <property type="entry name" value="Single-stranded DNA-binding protein"/>
    <property type="match status" value="1"/>
</dbReference>
<dbReference type="Gene3D" id="2.40.50.140">
    <property type="entry name" value="Nucleic acid-binding proteins"/>
    <property type="match status" value="1"/>
</dbReference>
<dbReference type="HAMAP" id="MF_00984">
    <property type="entry name" value="SSB"/>
    <property type="match status" value="1"/>
</dbReference>
<dbReference type="InterPro" id="IPR012340">
    <property type="entry name" value="NA-bd_OB-fold"/>
</dbReference>
<dbReference type="InterPro" id="IPR000424">
    <property type="entry name" value="Primosome_PriB/ssb"/>
</dbReference>
<dbReference type="InterPro" id="IPR011344">
    <property type="entry name" value="ssDNA-bd"/>
</dbReference>
<dbReference type="NCBIfam" id="TIGR00621">
    <property type="entry name" value="ssb"/>
    <property type="match status" value="1"/>
</dbReference>
<dbReference type="PANTHER" id="PTHR10302">
    <property type="entry name" value="SINGLE-STRANDED DNA-BINDING PROTEIN"/>
    <property type="match status" value="1"/>
</dbReference>
<dbReference type="PANTHER" id="PTHR10302:SF27">
    <property type="entry name" value="SINGLE-STRANDED DNA-BINDING PROTEIN"/>
    <property type="match status" value="1"/>
</dbReference>
<dbReference type="Pfam" id="PF00436">
    <property type="entry name" value="SSB"/>
    <property type="match status" value="1"/>
</dbReference>
<dbReference type="PIRSF" id="PIRSF002070">
    <property type="entry name" value="SSB"/>
    <property type="match status" value="1"/>
</dbReference>
<dbReference type="SUPFAM" id="SSF50249">
    <property type="entry name" value="Nucleic acid-binding proteins"/>
    <property type="match status" value="1"/>
</dbReference>
<dbReference type="PROSITE" id="PS50935">
    <property type="entry name" value="SSB"/>
    <property type="match status" value="1"/>
</dbReference>
<accession>Q8NVN2</accession>
<sequence length="156" mass="17674">MLNRTILVGRLTRDPELRTTQSGVNVASFTLAVNRTFTNAQGEREADFINIIVFKKQAENVNKYLSKGSLAGVDGRLQTRNYENKEGQRVYVTEVVADSIQFLEPKNTDDNQQDLYQQQAQQTRGQSQYSNNKPVKDNPFANANCPIEIDDNDLPF</sequence>
<feature type="chain" id="PRO_0000096105" description="Single-stranded DNA-binding protein">
    <location>
        <begin position="1"/>
        <end position="156"/>
    </location>
</feature>
<feature type="domain" description="SSB" evidence="1">
    <location>
        <begin position="1"/>
        <end position="104"/>
    </location>
</feature>
<feature type="region of interest" description="Disordered" evidence="2">
    <location>
        <begin position="122"/>
        <end position="146"/>
    </location>
</feature>
<proteinExistence type="inferred from homology"/>